<accession>Q8NSV6</accession>
<keyword id="KW-1185">Reference proteome</keyword>
<keyword id="KW-0687">Ribonucleoprotein</keyword>
<keyword id="KW-0689">Ribosomal protein</keyword>
<keyword id="KW-0694">RNA-binding</keyword>
<keyword id="KW-0699">rRNA-binding</keyword>
<keyword id="KW-0820">tRNA-binding</keyword>
<comment type="function">
    <text evidence="1">Located at the top of the head of the 30S subunit, it contacts several helices of the 16S rRNA. In the 70S ribosome it contacts the 23S rRNA (bridge B1a) and protein L5 of the 50S subunit (bridge B1b), connecting the 2 subunits; these bridges are implicated in subunit movement. Contacts the tRNAs in the A and P-sites.</text>
</comment>
<comment type="subunit">
    <text evidence="1">Part of the 30S ribosomal subunit. Forms a loose heterodimer with protein S19. Forms two bridges to the 50S subunit in the 70S ribosome.</text>
</comment>
<comment type="similarity">
    <text evidence="1">Belongs to the universal ribosomal protein uS13 family.</text>
</comment>
<protein>
    <recommendedName>
        <fullName evidence="1">Small ribosomal subunit protein uS13</fullName>
    </recommendedName>
    <alternativeName>
        <fullName evidence="3">30S ribosomal protein S13</fullName>
    </alternativeName>
</protein>
<reference key="1">
    <citation type="journal article" date="2003" name="Appl. Microbiol. Biotechnol.">
        <title>The Corynebacterium glutamicum genome: features and impacts on biotechnological processes.</title>
        <authorList>
            <person name="Ikeda M."/>
            <person name="Nakagawa S."/>
        </authorList>
    </citation>
    <scope>NUCLEOTIDE SEQUENCE [LARGE SCALE GENOMIC DNA]</scope>
    <source>
        <strain>ATCC 13032 / DSM 20300 / JCM 1318 / BCRC 11384 / CCUG 27702 / LMG 3730 / NBRC 12168 / NCIMB 10025 / NRRL B-2784 / 534</strain>
    </source>
</reference>
<reference key="2">
    <citation type="journal article" date="2003" name="J. Biotechnol.">
        <title>The complete Corynebacterium glutamicum ATCC 13032 genome sequence and its impact on the production of L-aspartate-derived amino acids and vitamins.</title>
        <authorList>
            <person name="Kalinowski J."/>
            <person name="Bathe B."/>
            <person name="Bartels D."/>
            <person name="Bischoff N."/>
            <person name="Bott M."/>
            <person name="Burkovski A."/>
            <person name="Dusch N."/>
            <person name="Eggeling L."/>
            <person name="Eikmanns B.J."/>
            <person name="Gaigalat L."/>
            <person name="Goesmann A."/>
            <person name="Hartmann M."/>
            <person name="Huthmacher K."/>
            <person name="Kraemer R."/>
            <person name="Linke B."/>
            <person name="McHardy A.C."/>
            <person name="Meyer F."/>
            <person name="Moeckel B."/>
            <person name="Pfefferle W."/>
            <person name="Puehler A."/>
            <person name="Rey D.A."/>
            <person name="Rueckert C."/>
            <person name="Rupp O."/>
            <person name="Sahm H."/>
            <person name="Wendisch V.F."/>
            <person name="Wiegraebe I."/>
            <person name="Tauch A."/>
        </authorList>
    </citation>
    <scope>NUCLEOTIDE SEQUENCE [LARGE SCALE GENOMIC DNA]</scope>
    <source>
        <strain>ATCC 13032 / DSM 20300 / JCM 1318 / BCRC 11384 / CCUG 27702 / LMG 3730 / NBRC 12168 / NCIMB 10025 / NRRL B-2784 / 534</strain>
    </source>
</reference>
<dbReference type="EMBL" id="BA000036">
    <property type="protein sequence ID" value="BAB97954.1"/>
    <property type="molecule type" value="Genomic_DNA"/>
</dbReference>
<dbReference type="EMBL" id="BX927149">
    <property type="protein sequence ID" value="CAF19267.1"/>
    <property type="molecule type" value="Genomic_DNA"/>
</dbReference>
<dbReference type="RefSeq" id="NP_599798.1">
    <property type="nucleotide sequence ID" value="NC_003450.3"/>
</dbReference>
<dbReference type="RefSeq" id="WP_003854425.1">
    <property type="nucleotide sequence ID" value="NC_006958.1"/>
</dbReference>
<dbReference type="SMR" id="Q8NSV6"/>
<dbReference type="STRING" id="196627.cg0652"/>
<dbReference type="GeneID" id="1018566"/>
<dbReference type="KEGG" id="cgb:cg0652"/>
<dbReference type="KEGG" id="cgl:Cgl0561"/>
<dbReference type="PATRIC" id="fig|196627.13.peg.553"/>
<dbReference type="eggNOG" id="COG0099">
    <property type="taxonomic scope" value="Bacteria"/>
</dbReference>
<dbReference type="HOGENOM" id="CLU_103849_1_2_11"/>
<dbReference type="OrthoDB" id="9803610at2"/>
<dbReference type="BioCyc" id="CORYNE:G18NG-10123-MONOMER"/>
<dbReference type="Proteomes" id="UP000000582">
    <property type="component" value="Chromosome"/>
</dbReference>
<dbReference type="Proteomes" id="UP000001009">
    <property type="component" value="Chromosome"/>
</dbReference>
<dbReference type="GO" id="GO:0005829">
    <property type="term" value="C:cytosol"/>
    <property type="evidence" value="ECO:0007669"/>
    <property type="project" value="TreeGrafter"/>
</dbReference>
<dbReference type="GO" id="GO:0015935">
    <property type="term" value="C:small ribosomal subunit"/>
    <property type="evidence" value="ECO:0007669"/>
    <property type="project" value="TreeGrafter"/>
</dbReference>
<dbReference type="GO" id="GO:0019843">
    <property type="term" value="F:rRNA binding"/>
    <property type="evidence" value="ECO:0007669"/>
    <property type="project" value="UniProtKB-UniRule"/>
</dbReference>
<dbReference type="GO" id="GO:0003735">
    <property type="term" value="F:structural constituent of ribosome"/>
    <property type="evidence" value="ECO:0007669"/>
    <property type="project" value="InterPro"/>
</dbReference>
<dbReference type="GO" id="GO:0000049">
    <property type="term" value="F:tRNA binding"/>
    <property type="evidence" value="ECO:0007669"/>
    <property type="project" value="UniProtKB-UniRule"/>
</dbReference>
<dbReference type="GO" id="GO:0006412">
    <property type="term" value="P:translation"/>
    <property type="evidence" value="ECO:0007669"/>
    <property type="project" value="UniProtKB-UniRule"/>
</dbReference>
<dbReference type="FunFam" id="1.10.8.50:FF:000001">
    <property type="entry name" value="30S ribosomal protein S13"/>
    <property type="match status" value="1"/>
</dbReference>
<dbReference type="FunFam" id="4.10.910.10:FF:000001">
    <property type="entry name" value="30S ribosomal protein S13"/>
    <property type="match status" value="1"/>
</dbReference>
<dbReference type="Gene3D" id="1.10.8.50">
    <property type="match status" value="1"/>
</dbReference>
<dbReference type="Gene3D" id="4.10.910.10">
    <property type="entry name" value="30s ribosomal protein s13, domain 2"/>
    <property type="match status" value="1"/>
</dbReference>
<dbReference type="HAMAP" id="MF_01315">
    <property type="entry name" value="Ribosomal_uS13"/>
    <property type="match status" value="1"/>
</dbReference>
<dbReference type="InterPro" id="IPR027437">
    <property type="entry name" value="Rbsml_uS13_C"/>
</dbReference>
<dbReference type="InterPro" id="IPR001892">
    <property type="entry name" value="Ribosomal_uS13"/>
</dbReference>
<dbReference type="InterPro" id="IPR010979">
    <property type="entry name" value="Ribosomal_uS13-like_H2TH"/>
</dbReference>
<dbReference type="InterPro" id="IPR019980">
    <property type="entry name" value="Ribosomal_uS13_bac-type"/>
</dbReference>
<dbReference type="InterPro" id="IPR018269">
    <property type="entry name" value="Ribosomal_uS13_CS"/>
</dbReference>
<dbReference type="NCBIfam" id="TIGR03631">
    <property type="entry name" value="uS13_bact"/>
    <property type="match status" value="1"/>
</dbReference>
<dbReference type="PANTHER" id="PTHR10871">
    <property type="entry name" value="30S RIBOSOMAL PROTEIN S13/40S RIBOSOMAL PROTEIN S18"/>
    <property type="match status" value="1"/>
</dbReference>
<dbReference type="PANTHER" id="PTHR10871:SF1">
    <property type="entry name" value="SMALL RIBOSOMAL SUBUNIT PROTEIN US13M"/>
    <property type="match status" value="1"/>
</dbReference>
<dbReference type="Pfam" id="PF00416">
    <property type="entry name" value="Ribosomal_S13"/>
    <property type="match status" value="1"/>
</dbReference>
<dbReference type="PIRSF" id="PIRSF002134">
    <property type="entry name" value="Ribosomal_S13"/>
    <property type="match status" value="1"/>
</dbReference>
<dbReference type="SUPFAM" id="SSF46946">
    <property type="entry name" value="S13-like H2TH domain"/>
    <property type="match status" value="1"/>
</dbReference>
<dbReference type="PROSITE" id="PS00646">
    <property type="entry name" value="RIBOSOMAL_S13_1"/>
    <property type="match status" value="1"/>
</dbReference>
<dbReference type="PROSITE" id="PS50159">
    <property type="entry name" value="RIBOSOMAL_S13_2"/>
    <property type="match status" value="1"/>
</dbReference>
<evidence type="ECO:0000255" key="1">
    <source>
        <dbReference type="HAMAP-Rule" id="MF_01315"/>
    </source>
</evidence>
<evidence type="ECO:0000256" key="2">
    <source>
        <dbReference type="SAM" id="MobiDB-lite"/>
    </source>
</evidence>
<evidence type="ECO:0000305" key="3"/>
<gene>
    <name evidence="1" type="primary">rpsM</name>
    <name type="ordered locus">Cgl0561</name>
    <name type="ordered locus">cg0652</name>
</gene>
<organism>
    <name type="scientific">Corynebacterium glutamicum (strain ATCC 13032 / DSM 20300 / JCM 1318 / BCRC 11384 / CCUG 27702 / LMG 3730 / NBRC 12168 / NCIMB 10025 / NRRL B-2784 / 534)</name>
    <dbReference type="NCBI Taxonomy" id="196627"/>
    <lineage>
        <taxon>Bacteria</taxon>
        <taxon>Bacillati</taxon>
        <taxon>Actinomycetota</taxon>
        <taxon>Actinomycetes</taxon>
        <taxon>Mycobacteriales</taxon>
        <taxon>Corynebacteriaceae</taxon>
        <taxon>Corynebacterium</taxon>
    </lineage>
</organism>
<name>RS13_CORGL</name>
<sequence length="122" mass="13834">MARLAGVDLPRNKRMEVALTYIYGIGPARSKQLLEETGISPDLRTDNLTDEQIAALRDVIEGTWKVEGDLRRQVQADIRRKIEIGCYQGIRHRRGLPVRGQRTKTNARTRKGPKKTIAGKKK</sequence>
<proteinExistence type="inferred from homology"/>
<feature type="chain" id="PRO_0000132086" description="Small ribosomal subunit protein uS13">
    <location>
        <begin position="1"/>
        <end position="122"/>
    </location>
</feature>
<feature type="region of interest" description="Disordered" evidence="2">
    <location>
        <begin position="95"/>
        <end position="122"/>
    </location>
</feature>